<keyword id="KW-0010">Activator</keyword>
<keyword id="KW-0067">ATP-binding</keyword>
<keyword id="KW-0238">DNA-binding</keyword>
<keyword id="KW-1048">Host nucleus</keyword>
<keyword id="KW-0547">Nucleotide-binding</keyword>
<keyword id="KW-0597">Phosphoprotein</keyword>
<keyword id="KW-0804">Transcription</keyword>
<keyword id="KW-0805">Transcription regulation</keyword>
<keyword id="KW-0231">Viral genome packaging</keyword>
<keyword id="KW-1188">Viral release from host cell</keyword>
<keyword id="KW-0946">Virion</keyword>
<protein>
    <recommendedName>
        <fullName evidence="1">Packaging protein 1</fullName>
    </recommendedName>
    <alternativeName>
        <fullName evidence="1">Packaging protein IVa2</fullName>
    </alternativeName>
</protein>
<sequence length="448" mass="50678">METKGRRSAAVLDQQDESEAHPRKRPTRRAPLHRDGNNPDSDAATMEGSDPGSAGRPSSDSLLQEPSQPAKRGGLLDRDAIEHITELWDRLELLQQTLSKMPMADGLKPLKNFSSLQELLSLGGERLLTDLVRENIHVREMMNEVAPLLREDGSCRSLNYHLQPVIGVIYGPTGCGKSQLLRNLLSSQLITPAPETVFFIAPQVDMIPPSELKAWEMQICEGNYAPGPQGTFIPQSGTLRPKFIKMAYDDLTQEHNYDVSDPRNVFARAAAHGPIAIIMDECMENLGGHKGVSKFFHAFPSKLHDKFPKCTGYTVLVVLHNMNPRRDLGGNIANLKIQSKMHIISPRMHPSQLNRFVNTYTKGLPVAISLLLKDIVQHHALRPCYDWVIYNTTPEQEALQWSHLHPRDGLMPMYLNIQSHLYRVLEKIHRVLNDRNRWSRAYRARKIK</sequence>
<gene>
    <name evidence="1" type="primary">IVa2</name>
</gene>
<name>PKG1_ADE07</name>
<reference key="1">
    <citation type="journal article" date="1982" name="Gene">
        <title>The nucleotide sequence of the gene encoding protein IVa2 in human adenovirus type 7.</title>
        <authorList>
            <person name="Engler J.A."/>
            <person name="van Bree M.P."/>
        </authorList>
    </citation>
    <scope>NUCLEOTIDE SEQUENCE [GENOMIC DNA]</scope>
</reference>
<reference key="2">
    <citation type="submission" date="1985-06" db="EMBL/GenBank/DDBJ databases">
        <authorList>
            <person name="van Ormondt H."/>
        </authorList>
    </citation>
    <scope>NUCLEOTIDE SEQUENCE [GENOMIC DNA]</scope>
    <source>
        <strain>Gomen</strain>
    </source>
</reference>
<proteinExistence type="inferred from homology"/>
<organism>
    <name type="scientific">Human adenovirus B serotype 7</name>
    <name type="common">HAdV-7</name>
    <name type="synonym">Human adenovirus 7</name>
    <dbReference type="NCBI Taxonomy" id="10519"/>
    <lineage>
        <taxon>Viruses</taxon>
        <taxon>Varidnaviria</taxon>
        <taxon>Bamfordvirae</taxon>
        <taxon>Preplasmiviricota</taxon>
        <taxon>Tectiliviricetes</taxon>
        <taxon>Rowavirales</taxon>
        <taxon>Adenoviridae</taxon>
        <taxon>Mastadenovirus</taxon>
        <taxon>Human mastadenovirus B</taxon>
    </lineage>
</organism>
<organismHost>
    <name type="scientific">Homo sapiens</name>
    <name type="common">Human</name>
    <dbReference type="NCBI Taxonomy" id="9606"/>
</organismHost>
<dbReference type="EMBL" id="X03000">
    <property type="protein sequence ID" value="CAA26766.1"/>
    <property type="molecule type" value="Genomic_DNA"/>
</dbReference>
<dbReference type="PIR" id="A03843">
    <property type="entry name" value="Q4ADA7"/>
</dbReference>
<dbReference type="GO" id="GO:0044196">
    <property type="term" value="C:host cell nucleolus"/>
    <property type="evidence" value="ECO:0007669"/>
    <property type="project" value="UniProtKB-SubCell"/>
</dbReference>
<dbReference type="GO" id="GO:0044095">
    <property type="term" value="C:host cell nucleoplasm"/>
    <property type="evidence" value="ECO:0007669"/>
    <property type="project" value="UniProtKB-SubCell"/>
</dbReference>
<dbReference type="GO" id="GO:0044423">
    <property type="term" value="C:virion component"/>
    <property type="evidence" value="ECO:0007669"/>
    <property type="project" value="UniProtKB-UniRule"/>
</dbReference>
<dbReference type="GO" id="GO:0005524">
    <property type="term" value="F:ATP binding"/>
    <property type="evidence" value="ECO:0007669"/>
    <property type="project" value="UniProtKB-UniRule"/>
</dbReference>
<dbReference type="GO" id="GO:0016887">
    <property type="term" value="F:ATP hydrolysis activity"/>
    <property type="evidence" value="ECO:0007669"/>
    <property type="project" value="InterPro"/>
</dbReference>
<dbReference type="GO" id="GO:0003677">
    <property type="term" value="F:DNA binding"/>
    <property type="evidence" value="ECO:0007669"/>
    <property type="project" value="UniProtKB-UniRule"/>
</dbReference>
<dbReference type="GO" id="GO:0006351">
    <property type="term" value="P:DNA-templated transcription"/>
    <property type="evidence" value="ECO:0007669"/>
    <property type="project" value="UniProtKB-UniRule"/>
</dbReference>
<dbReference type="GO" id="GO:0039708">
    <property type="term" value="P:nuclear capsid assembly"/>
    <property type="evidence" value="ECO:0007669"/>
    <property type="project" value="UniProtKB-UniRule"/>
</dbReference>
<dbReference type="GO" id="GO:0006355">
    <property type="term" value="P:regulation of DNA-templated transcription"/>
    <property type="evidence" value="ECO:0007669"/>
    <property type="project" value="UniProtKB-UniRule"/>
</dbReference>
<dbReference type="GO" id="GO:0098035">
    <property type="term" value="P:viral DNA genome packaging via site-specific sequence recognition"/>
    <property type="evidence" value="ECO:0007669"/>
    <property type="project" value="UniProtKB-UniRule"/>
</dbReference>
<dbReference type="GO" id="GO:0019076">
    <property type="term" value="P:viral release from host cell"/>
    <property type="evidence" value="ECO:0007669"/>
    <property type="project" value="UniProtKB-UniRule"/>
</dbReference>
<dbReference type="GO" id="GO:0019083">
    <property type="term" value="P:viral transcription"/>
    <property type="evidence" value="ECO:0007669"/>
    <property type="project" value="UniProtKB-UniRule"/>
</dbReference>
<dbReference type="HAMAP" id="MF_04057">
    <property type="entry name" value="ADV_PKG1"/>
    <property type="match status" value="1"/>
</dbReference>
<dbReference type="InterPro" id="IPR003593">
    <property type="entry name" value="AAA+_ATPase"/>
</dbReference>
<dbReference type="InterPro" id="IPR003389">
    <property type="entry name" value="Adeno_IVa2"/>
</dbReference>
<dbReference type="InterPro" id="IPR027417">
    <property type="entry name" value="P-loop_NTPase"/>
</dbReference>
<dbReference type="Pfam" id="PF02456">
    <property type="entry name" value="Adeno_IVa2"/>
    <property type="match status" value="1"/>
</dbReference>
<dbReference type="SMART" id="SM00382">
    <property type="entry name" value="AAA"/>
    <property type="match status" value="1"/>
</dbReference>
<dbReference type="SUPFAM" id="SSF52540">
    <property type="entry name" value="P-loop containing nucleoside triphosphate hydrolases"/>
    <property type="match status" value="1"/>
</dbReference>
<feature type="chain" id="PRO_0000221885" description="Packaging protein 1">
    <location>
        <begin position="1"/>
        <end position="448"/>
    </location>
</feature>
<feature type="region of interest" description="Disordered" evidence="2">
    <location>
        <begin position="1"/>
        <end position="76"/>
    </location>
</feature>
<feature type="region of interest" description="DNA-binding" evidence="1">
    <location>
        <begin position="440"/>
        <end position="448"/>
    </location>
</feature>
<feature type="compositionally biased region" description="Basic residues" evidence="2">
    <location>
        <begin position="22"/>
        <end position="31"/>
    </location>
</feature>
<feature type="compositionally biased region" description="Polar residues" evidence="2">
    <location>
        <begin position="56"/>
        <end position="67"/>
    </location>
</feature>
<feature type="binding site" evidence="1">
    <location>
        <begin position="171"/>
        <end position="178"/>
    </location>
    <ligand>
        <name>ATP</name>
        <dbReference type="ChEBI" id="CHEBI:30616"/>
    </ligand>
</feature>
<feature type="sequence conflict" description="In Ref. 2; CAA26766." ref="2">
    <original>K</original>
    <variation>R</variation>
    <location>
        <position position="306"/>
    </location>
</feature>
<comment type="function">
    <text evidence="1">Component of the packaging machinery which encapsidates the viral DNA into preformed capsids and transcriptional activator of the viral major late promoter (MLP). Binds, along with packaging proteins 2 and 3, to the specific packaging sequence on the left end of viral genomic DNA and displays ATPase activity thereby providing the power stroke of the packaging machinery. The activity of packaging protein IVa2 is stimulated by protein 33K which acts as a terminase. May be the protein that pumps DNA into the capsid powered by ATP hydrolysis. Specifically binds to the 5'-CG-3' nucleotides of the repeats making up the packaging sequence. Component of the DEF-A and DEF-B transcription factors that bind downstream elements of the major late promoter (MLP), and stimulate transcription from the MLP after initiation of viral DNA replication. DEF-A is a heterodimer packaging proteins 1 and 2 and DEF-B is a homodimer of packaging protein 1.</text>
</comment>
<comment type="subunit">
    <text evidence="1">Homodimer. Part of a genome packaging complex composed of packaging proteins 1, 2 and 3; this complex specifically binds to the packaging sequence on the left end of viral genomic DNA and performs packaging of the viral genome. Interacts with protein 33K.</text>
</comment>
<comment type="subcellular location">
    <subcellularLocation>
        <location evidence="1">Virion</location>
    </subcellularLocation>
    <subcellularLocation>
        <location evidence="1">Host nucleus</location>
        <location evidence="1">Host nucleoplasm</location>
    </subcellularLocation>
    <subcellularLocation>
        <location evidence="1">Host nucleus</location>
        <location evidence="1">Host nucleolus</location>
    </subcellularLocation>
    <text evidence="1">Located at a unique vertex of the capsid. Present in about 6-8 copies per virion.</text>
</comment>
<comment type="induction">
    <text evidence="1">Expressed in the intermediate phase of the viral replicative cycle.</text>
</comment>
<comment type="similarity">
    <text evidence="1">Belongs to the adenoviridae packaging protein 1 family.</text>
</comment>
<accession>P03273</accession>
<accession>Q64833</accession>
<evidence type="ECO:0000255" key="1">
    <source>
        <dbReference type="HAMAP-Rule" id="MF_04057"/>
    </source>
</evidence>
<evidence type="ECO:0000256" key="2">
    <source>
        <dbReference type="SAM" id="MobiDB-lite"/>
    </source>
</evidence>